<gene>
    <name evidence="1" type="primary">uvrC</name>
    <name type="ordered locus">FTF0777</name>
</gene>
<keyword id="KW-0963">Cytoplasm</keyword>
<keyword id="KW-0227">DNA damage</keyword>
<keyword id="KW-0228">DNA excision</keyword>
<keyword id="KW-0234">DNA repair</keyword>
<keyword id="KW-0267">Excision nuclease</keyword>
<keyword id="KW-0742">SOS response</keyword>
<protein>
    <recommendedName>
        <fullName evidence="1">UvrABC system protein C</fullName>
        <shortName evidence="1">Protein UvrC</shortName>
    </recommendedName>
    <alternativeName>
        <fullName evidence="1">Excinuclease ABC subunit C</fullName>
    </alternativeName>
</protein>
<sequence>MIVDNSKDFDLKSFLANLTTHSGVYRMLDKHGEIIYVGKAKNLKNRVNSYFSKGAKDSKTLMMVEQIARIEITITPSDYEAYLLENNLIKQHRPKYNILFKDDKSYPYLVISRDKFPRVSFYRSKSAYKKGQCFGPYVSISSVKNTLNTIQKIFPIRQCENSYYKSRVRPCLQYQIKCCLAPCVGLVSQQQYDEQLAILKKFLAGKFSSVLEEISAKMYQASEDMEYEKAQVYRDQLVVLRKLQQQQIVDIQEDKTFDVIGIYMQDSYASIALLQIQNGDVVADRHWSIDAKGQDKTSIMHAFLSHFYLGDEIRNIWPKNIILSKVEFADITDLMNSISQKIGQAINWIIAPAADNLKWLKLAEVNARQKLNIYTSSKSQYQKRLESLKEFLELEKDIKRIECFDISHFQGEATIASCVVYTDDGEDRKSHRRYNIKDIKSGDDYAAIHQAVSRRVSSGLEADNLPDVMIIDGGKGQIHQAEAVFREYGIQDKVQLVSLGKGIERISGKEKIYKGFDDTEYTLDEHNPGFLLLRQVRDSAHDHAIKGQRKKVSANRQSSIIEEIEGVGPKRRKALMMYFGGWQELSRASVDEIAKVKGISKKLAQEIWECFH</sequence>
<organism>
    <name type="scientific">Francisella tularensis subsp. tularensis (strain FSC 198)</name>
    <dbReference type="NCBI Taxonomy" id="393115"/>
    <lineage>
        <taxon>Bacteria</taxon>
        <taxon>Pseudomonadati</taxon>
        <taxon>Pseudomonadota</taxon>
        <taxon>Gammaproteobacteria</taxon>
        <taxon>Thiotrichales</taxon>
        <taxon>Francisellaceae</taxon>
        <taxon>Francisella</taxon>
    </lineage>
</organism>
<reference key="1">
    <citation type="journal article" date="2007" name="PLoS ONE">
        <title>Genome sequencing shows that European isolates of Francisella tularensis subspecies tularensis are almost identical to US laboratory strain Schu S4.</title>
        <authorList>
            <person name="Chaudhuri R.R."/>
            <person name="Ren C.-P."/>
            <person name="Desmond L."/>
            <person name="Vincent G.A."/>
            <person name="Silman N.J."/>
            <person name="Brehm J.K."/>
            <person name="Elmore M.J."/>
            <person name="Hudson M.J."/>
            <person name="Forsman M."/>
            <person name="Isherwood K.E."/>
            <person name="Gurycova D."/>
            <person name="Minton N.P."/>
            <person name="Titball R.W."/>
            <person name="Pallen M.J."/>
            <person name="Vipond R."/>
        </authorList>
    </citation>
    <scope>NUCLEOTIDE SEQUENCE [LARGE SCALE GENOMIC DNA]</scope>
    <source>
        <strain>FSC 198</strain>
    </source>
</reference>
<comment type="function">
    <text evidence="1">The UvrABC repair system catalyzes the recognition and processing of DNA lesions. UvrC both incises the 5' and 3' sides of the lesion. The N-terminal half is responsible for the 3' incision and the C-terminal half is responsible for the 5' incision.</text>
</comment>
<comment type="subunit">
    <text evidence="1">Interacts with UvrB in an incision complex.</text>
</comment>
<comment type="subcellular location">
    <subcellularLocation>
        <location evidence="1">Cytoplasm</location>
    </subcellularLocation>
</comment>
<comment type="similarity">
    <text evidence="1">Belongs to the UvrC family.</text>
</comment>
<dbReference type="EMBL" id="AM286280">
    <property type="protein sequence ID" value="CAL08793.1"/>
    <property type="molecule type" value="Genomic_DNA"/>
</dbReference>
<dbReference type="RefSeq" id="WP_003020656.1">
    <property type="nucleotide sequence ID" value="NC_008245.1"/>
</dbReference>
<dbReference type="SMR" id="Q14I60"/>
<dbReference type="KEGG" id="ftf:FTF0777"/>
<dbReference type="HOGENOM" id="CLU_014841_3_0_6"/>
<dbReference type="GO" id="GO:0005737">
    <property type="term" value="C:cytoplasm"/>
    <property type="evidence" value="ECO:0007669"/>
    <property type="project" value="UniProtKB-SubCell"/>
</dbReference>
<dbReference type="GO" id="GO:0009380">
    <property type="term" value="C:excinuclease repair complex"/>
    <property type="evidence" value="ECO:0007669"/>
    <property type="project" value="InterPro"/>
</dbReference>
<dbReference type="GO" id="GO:0003677">
    <property type="term" value="F:DNA binding"/>
    <property type="evidence" value="ECO:0007669"/>
    <property type="project" value="UniProtKB-UniRule"/>
</dbReference>
<dbReference type="GO" id="GO:0009381">
    <property type="term" value="F:excinuclease ABC activity"/>
    <property type="evidence" value="ECO:0007669"/>
    <property type="project" value="UniProtKB-UniRule"/>
</dbReference>
<dbReference type="GO" id="GO:0006289">
    <property type="term" value="P:nucleotide-excision repair"/>
    <property type="evidence" value="ECO:0007669"/>
    <property type="project" value="UniProtKB-UniRule"/>
</dbReference>
<dbReference type="GO" id="GO:0009432">
    <property type="term" value="P:SOS response"/>
    <property type="evidence" value="ECO:0007669"/>
    <property type="project" value="UniProtKB-UniRule"/>
</dbReference>
<dbReference type="CDD" id="cd10434">
    <property type="entry name" value="GIY-YIG_UvrC_Cho"/>
    <property type="match status" value="1"/>
</dbReference>
<dbReference type="FunFam" id="3.30.420.340:FF:000001">
    <property type="entry name" value="UvrABC system protein C"/>
    <property type="match status" value="1"/>
</dbReference>
<dbReference type="FunFam" id="3.40.1440.10:FF:000001">
    <property type="entry name" value="UvrABC system protein C"/>
    <property type="match status" value="1"/>
</dbReference>
<dbReference type="Gene3D" id="1.10.150.20">
    <property type="entry name" value="5' to 3' exonuclease, C-terminal subdomain"/>
    <property type="match status" value="1"/>
</dbReference>
<dbReference type="Gene3D" id="3.40.1440.10">
    <property type="entry name" value="GIY-YIG endonuclease"/>
    <property type="match status" value="1"/>
</dbReference>
<dbReference type="Gene3D" id="4.10.860.10">
    <property type="entry name" value="UVR domain"/>
    <property type="match status" value="1"/>
</dbReference>
<dbReference type="Gene3D" id="3.30.420.340">
    <property type="entry name" value="UvrC, RNAse H endonuclease domain"/>
    <property type="match status" value="1"/>
</dbReference>
<dbReference type="HAMAP" id="MF_00203">
    <property type="entry name" value="UvrC"/>
    <property type="match status" value="1"/>
</dbReference>
<dbReference type="InterPro" id="IPR000305">
    <property type="entry name" value="GIY-YIG_endonuc"/>
</dbReference>
<dbReference type="InterPro" id="IPR035901">
    <property type="entry name" value="GIY-YIG_endonuc_sf"/>
</dbReference>
<dbReference type="InterPro" id="IPR047296">
    <property type="entry name" value="GIY-YIG_UvrC_Cho"/>
</dbReference>
<dbReference type="InterPro" id="IPR010994">
    <property type="entry name" value="RuvA_2-like"/>
</dbReference>
<dbReference type="InterPro" id="IPR001943">
    <property type="entry name" value="UVR_dom"/>
</dbReference>
<dbReference type="InterPro" id="IPR036876">
    <property type="entry name" value="UVR_dom_sf"/>
</dbReference>
<dbReference type="InterPro" id="IPR050066">
    <property type="entry name" value="UvrABC_protein_C"/>
</dbReference>
<dbReference type="InterPro" id="IPR004791">
    <property type="entry name" value="UvrC"/>
</dbReference>
<dbReference type="InterPro" id="IPR001162">
    <property type="entry name" value="UvrC_RNase_H_dom"/>
</dbReference>
<dbReference type="InterPro" id="IPR038476">
    <property type="entry name" value="UvrC_RNase_H_dom_sf"/>
</dbReference>
<dbReference type="NCBIfam" id="TIGR00194">
    <property type="entry name" value="uvrC"/>
    <property type="match status" value="1"/>
</dbReference>
<dbReference type="PANTHER" id="PTHR30562:SF1">
    <property type="entry name" value="UVRABC SYSTEM PROTEIN C"/>
    <property type="match status" value="1"/>
</dbReference>
<dbReference type="PANTHER" id="PTHR30562">
    <property type="entry name" value="UVRC/OXIDOREDUCTASE"/>
    <property type="match status" value="1"/>
</dbReference>
<dbReference type="Pfam" id="PF01541">
    <property type="entry name" value="GIY-YIG"/>
    <property type="match status" value="1"/>
</dbReference>
<dbReference type="Pfam" id="PF14520">
    <property type="entry name" value="HHH_5"/>
    <property type="match status" value="1"/>
</dbReference>
<dbReference type="Pfam" id="PF02151">
    <property type="entry name" value="UVR"/>
    <property type="match status" value="1"/>
</dbReference>
<dbReference type="Pfam" id="PF22920">
    <property type="entry name" value="UvrC_RNaseH"/>
    <property type="match status" value="1"/>
</dbReference>
<dbReference type="Pfam" id="PF08459">
    <property type="entry name" value="UvrC_RNaseH_dom"/>
    <property type="match status" value="1"/>
</dbReference>
<dbReference type="SMART" id="SM00465">
    <property type="entry name" value="GIYc"/>
    <property type="match status" value="1"/>
</dbReference>
<dbReference type="SUPFAM" id="SSF46600">
    <property type="entry name" value="C-terminal UvrC-binding domain of UvrB"/>
    <property type="match status" value="1"/>
</dbReference>
<dbReference type="SUPFAM" id="SSF82771">
    <property type="entry name" value="GIY-YIG endonuclease"/>
    <property type="match status" value="1"/>
</dbReference>
<dbReference type="SUPFAM" id="SSF47781">
    <property type="entry name" value="RuvA domain 2-like"/>
    <property type="match status" value="1"/>
</dbReference>
<dbReference type="PROSITE" id="PS50164">
    <property type="entry name" value="GIY_YIG"/>
    <property type="match status" value="1"/>
</dbReference>
<dbReference type="PROSITE" id="PS50151">
    <property type="entry name" value="UVR"/>
    <property type="match status" value="1"/>
</dbReference>
<dbReference type="PROSITE" id="PS50165">
    <property type="entry name" value="UVRC"/>
    <property type="match status" value="1"/>
</dbReference>
<name>UVRC_FRAT1</name>
<accession>Q14I60</accession>
<evidence type="ECO:0000255" key="1">
    <source>
        <dbReference type="HAMAP-Rule" id="MF_00203"/>
    </source>
</evidence>
<feature type="chain" id="PRO_0000264894" description="UvrABC system protein C">
    <location>
        <begin position="1"/>
        <end position="612"/>
    </location>
</feature>
<feature type="domain" description="GIY-YIG" evidence="1">
    <location>
        <begin position="20"/>
        <end position="98"/>
    </location>
</feature>
<feature type="domain" description="UVR" evidence="1">
    <location>
        <begin position="208"/>
        <end position="243"/>
    </location>
</feature>
<proteinExistence type="inferred from homology"/>